<keyword id="KW-1003">Cell membrane</keyword>
<keyword id="KW-0472">Membrane</keyword>
<keyword id="KW-0808">Transferase</keyword>
<keyword id="KW-0812">Transmembrane</keyword>
<keyword id="KW-1133">Transmembrane helix</keyword>
<evidence type="ECO:0000255" key="1">
    <source>
        <dbReference type="HAMAP-Rule" id="MF_01147"/>
    </source>
</evidence>
<dbReference type="EC" id="2.5.1.145" evidence="1"/>
<dbReference type="EMBL" id="AL766846">
    <property type="protein sequence ID" value="CAD46402.1"/>
    <property type="molecule type" value="Genomic_DNA"/>
</dbReference>
<dbReference type="RefSeq" id="WP_000609732.1">
    <property type="nucleotide sequence ID" value="NC_004368.1"/>
</dbReference>
<dbReference type="SMR" id="Q8E669"/>
<dbReference type="KEGG" id="san:gbs0758"/>
<dbReference type="eggNOG" id="COG0682">
    <property type="taxonomic scope" value="Bacteria"/>
</dbReference>
<dbReference type="HOGENOM" id="CLU_013386_0_1_9"/>
<dbReference type="UniPathway" id="UPA00664"/>
<dbReference type="Proteomes" id="UP000000823">
    <property type="component" value="Chromosome"/>
</dbReference>
<dbReference type="GO" id="GO:0005886">
    <property type="term" value="C:plasma membrane"/>
    <property type="evidence" value="ECO:0007669"/>
    <property type="project" value="UniProtKB-SubCell"/>
</dbReference>
<dbReference type="GO" id="GO:0008961">
    <property type="term" value="F:phosphatidylglycerol-prolipoprotein diacylglyceryl transferase activity"/>
    <property type="evidence" value="ECO:0007669"/>
    <property type="project" value="UniProtKB-UniRule"/>
</dbReference>
<dbReference type="GO" id="GO:0042158">
    <property type="term" value="P:lipoprotein biosynthetic process"/>
    <property type="evidence" value="ECO:0007669"/>
    <property type="project" value="UniProtKB-UniRule"/>
</dbReference>
<dbReference type="HAMAP" id="MF_01147">
    <property type="entry name" value="Lgt"/>
    <property type="match status" value="1"/>
</dbReference>
<dbReference type="InterPro" id="IPR001640">
    <property type="entry name" value="Lgt"/>
</dbReference>
<dbReference type="NCBIfam" id="TIGR00544">
    <property type="entry name" value="lgt"/>
    <property type="match status" value="1"/>
</dbReference>
<dbReference type="PANTHER" id="PTHR30589:SF0">
    <property type="entry name" value="PHOSPHATIDYLGLYCEROL--PROLIPOPROTEIN DIACYLGLYCERYL TRANSFERASE"/>
    <property type="match status" value="1"/>
</dbReference>
<dbReference type="PANTHER" id="PTHR30589">
    <property type="entry name" value="PROLIPOPROTEIN DIACYLGLYCERYL TRANSFERASE"/>
    <property type="match status" value="1"/>
</dbReference>
<dbReference type="Pfam" id="PF01790">
    <property type="entry name" value="LGT"/>
    <property type="match status" value="1"/>
</dbReference>
<dbReference type="PROSITE" id="PS01311">
    <property type="entry name" value="LGT"/>
    <property type="match status" value="1"/>
</dbReference>
<sequence length="257" mass="29591">MINPVAIRLGPFSIRWYAICIVSGMLLAVYLAMKEAPRKNIKSDDILDFILMAFPLSIVGARIYYVIFEWAYYSKHPVEIIAIWNGGIAIYGGLITGAILLVIFSYRRLINPIDFLDIAAPGVMIAQAIGRWGNFINQEAYGRAVKNLNYVPNFIKNQMYIDGAYRVPTFLYESLWNFLGFVIIMSIRHRPRTLKQGEVACFYLVWYGCGRFIIEGMRTDSLYLAGLRVSQWLSVILVIIGIVMIIYRRREQHISYY</sequence>
<gene>
    <name evidence="1" type="primary">lgt</name>
    <name type="ordered locus">gbs0758</name>
</gene>
<organism>
    <name type="scientific">Streptococcus agalactiae serotype III (strain NEM316)</name>
    <dbReference type="NCBI Taxonomy" id="211110"/>
    <lineage>
        <taxon>Bacteria</taxon>
        <taxon>Bacillati</taxon>
        <taxon>Bacillota</taxon>
        <taxon>Bacilli</taxon>
        <taxon>Lactobacillales</taxon>
        <taxon>Streptococcaceae</taxon>
        <taxon>Streptococcus</taxon>
    </lineage>
</organism>
<comment type="function">
    <text evidence="1">Catalyzes the transfer of the diacylglyceryl group from phosphatidylglycerol to the sulfhydryl group of the N-terminal cysteine of a prolipoprotein, the first step in the formation of mature lipoproteins.</text>
</comment>
<comment type="catalytic activity">
    <reaction evidence="1">
        <text>L-cysteinyl-[prolipoprotein] + a 1,2-diacyl-sn-glycero-3-phospho-(1'-sn-glycerol) = an S-1,2-diacyl-sn-glyceryl-L-cysteinyl-[prolipoprotein] + sn-glycerol 1-phosphate + H(+)</text>
        <dbReference type="Rhea" id="RHEA:56712"/>
        <dbReference type="Rhea" id="RHEA-COMP:14679"/>
        <dbReference type="Rhea" id="RHEA-COMP:14680"/>
        <dbReference type="ChEBI" id="CHEBI:15378"/>
        <dbReference type="ChEBI" id="CHEBI:29950"/>
        <dbReference type="ChEBI" id="CHEBI:57685"/>
        <dbReference type="ChEBI" id="CHEBI:64716"/>
        <dbReference type="ChEBI" id="CHEBI:140658"/>
        <dbReference type="EC" id="2.5.1.145"/>
    </reaction>
</comment>
<comment type="pathway">
    <text evidence="1">Protein modification; lipoprotein biosynthesis (diacylglyceryl transfer).</text>
</comment>
<comment type="subcellular location">
    <subcellularLocation>
        <location evidence="1">Cell membrane</location>
        <topology evidence="1">Multi-pass membrane protein</topology>
    </subcellularLocation>
</comment>
<comment type="similarity">
    <text evidence="1">Belongs to the Lgt family.</text>
</comment>
<proteinExistence type="inferred from homology"/>
<name>LGT_STRA3</name>
<accession>Q8E669</accession>
<protein>
    <recommendedName>
        <fullName evidence="1">Phosphatidylglycerol--prolipoprotein diacylglyceryl transferase</fullName>
        <ecNumber evidence="1">2.5.1.145</ecNumber>
    </recommendedName>
</protein>
<reference key="1">
    <citation type="journal article" date="2002" name="Mol. Microbiol.">
        <title>Genome sequence of Streptococcus agalactiae, a pathogen causing invasive neonatal disease.</title>
        <authorList>
            <person name="Glaser P."/>
            <person name="Rusniok C."/>
            <person name="Buchrieser C."/>
            <person name="Chevalier F."/>
            <person name="Frangeul L."/>
            <person name="Msadek T."/>
            <person name="Zouine M."/>
            <person name="Couve E."/>
            <person name="Lalioui L."/>
            <person name="Poyart C."/>
            <person name="Trieu-Cuot P."/>
            <person name="Kunst F."/>
        </authorList>
    </citation>
    <scope>NUCLEOTIDE SEQUENCE [LARGE SCALE GENOMIC DNA]</scope>
    <source>
        <strain>NEM316</strain>
    </source>
</reference>
<feature type="chain" id="PRO_0000172682" description="Phosphatidylglycerol--prolipoprotein diacylglyceryl transferase">
    <location>
        <begin position="1"/>
        <end position="257"/>
    </location>
</feature>
<feature type="transmembrane region" description="Helical" evidence="1">
    <location>
        <begin position="12"/>
        <end position="32"/>
    </location>
</feature>
<feature type="transmembrane region" description="Helical" evidence="1">
    <location>
        <begin position="49"/>
        <end position="69"/>
    </location>
</feature>
<feature type="transmembrane region" description="Helical" evidence="1">
    <location>
        <begin position="83"/>
        <end position="103"/>
    </location>
</feature>
<feature type="transmembrane region" description="Helical" evidence="1">
    <location>
        <begin position="109"/>
        <end position="129"/>
    </location>
</feature>
<feature type="transmembrane region" description="Helical" evidence="1">
    <location>
        <begin position="167"/>
        <end position="187"/>
    </location>
</feature>
<feature type="transmembrane region" description="Helical" evidence="1">
    <location>
        <begin position="197"/>
        <end position="217"/>
    </location>
</feature>
<feature type="transmembrane region" description="Helical" evidence="1">
    <location>
        <begin position="226"/>
        <end position="246"/>
    </location>
</feature>
<feature type="binding site" evidence="1">
    <location>
        <position position="131"/>
    </location>
    <ligand>
        <name>a 1,2-diacyl-sn-glycero-3-phospho-(1'-sn-glycerol)</name>
        <dbReference type="ChEBI" id="CHEBI:64716"/>
    </ligand>
</feature>